<gene>
    <name type="ordered locus">HEAR0259</name>
</gene>
<protein>
    <recommendedName>
        <fullName evidence="1">UPF0178 protein HEAR0259</fullName>
    </recommendedName>
</protein>
<keyword id="KW-1185">Reference proteome</keyword>
<accession>A4G1V0</accession>
<feature type="chain" id="PRO_1000014423" description="UPF0178 protein HEAR0259">
    <location>
        <begin position="1"/>
        <end position="149"/>
    </location>
</feature>
<reference key="1">
    <citation type="journal article" date="2007" name="PLoS Genet.">
        <title>A tale of two oxidation states: bacterial colonization of arsenic-rich environments.</title>
        <authorList>
            <person name="Muller D."/>
            <person name="Medigue C."/>
            <person name="Koechler S."/>
            <person name="Barbe V."/>
            <person name="Barakat M."/>
            <person name="Talla E."/>
            <person name="Bonnefoy V."/>
            <person name="Krin E."/>
            <person name="Arsene-Ploetze F."/>
            <person name="Carapito C."/>
            <person name="Chandler M."/>
            <person name="Cournoyer B."/>
            <person name="Cruveiller S."/>
            <person name="Dossat C."/>
            <person name="Duval S."/>
            <person name="Heymann M."/>
            <person name="Leize E."/>
            <person name="Lieutaud A."/>
            <person name="Lievremont D."/>
            <person name="Makita Y."/>
            <person name="Mangenot S."/>
            <person name="Nitschke W."/>
            <person name="Ortet P."/>
            <person name="Perdrial N."/>
            <person name="Schoepp B."/>
            <person name="Siguier P."/>
            <person name="Simeonova D.D."/>
            <person name="Rouy Z."/>
            <person name="Segurens B."/>
            <person name="Turlin E."/>
            <person name="Vallenet D."/>
            <person name="van Dorsselaer A."/>
            <person name="Weiss S."/>
            <person name="Weissenbach J."/>
            <person name="Lett M.-C."/>
            <person name="Danchin A."/>
            <person name="Bertin P.N."/>
        </authorList>
    </citation>
    <scope>NUCLEOTIDE SEQUENCE [LARGE SCALE GENOMIC DNA]</scope>
    <source>
        <strain>ULPAs1</strain>
    </source>
</reference>
<name>Y259_HERAR</name>
<sequence length="149" mass="16491">MQIWVDADACPSVIKDVLFRVADRLQVQVTLVANKLLRTPPSRFIRAIQVPAGFDVADNEIVRLVQEGDLVITGDIPLAADVLEKGGLPLNPRGEFYTKDTIQQQLTMRTFMDELRSSGVDTGGPAAFSQSDTRNFANQLDRFLTRTGK</sequence>
<comment type="similarity">
    <text evidence="1">Belongs to the UPF0178 family.</text>
</comment>
<organism>
    <name type="scientific">Herminiimonas arsenicoxydans</name>
    <dbReference type="NCBI Taxonomy" id="204773"/>
    <lineage>
        <taxon>Bacteria</taxon>
        <taxon>Pseudomonadati</taxon>
        <taxon>Pseudomonadota</taxon>
        <taxon>Betaproteobacteria</taxon>
        <taxon>Burkholderiales</taxon>
        <taxon>Oxalobacteraceae</taxon>
        <taxon>Herminiimonas</taxon>
    </lineage>
</organism>
<proteinExistence type="inferred from homology"/>
<dbReference type="EMBL" id="CU207211">
    <property type="protein sequence ID" value="CAL60487.1"/>
    <property type="molecule type" value="Genomic_DNA"/>
</dbReference>
<dbReference type="STRING" id="204773.HEAR0259"/>
<dbReference type="KEGG" id="har:HEAR0259"/>
<dbReference type="eggNOG" id="COG1671">
    <property type="taxonomic scope" value="Bacteria"/>
</dbReference>
<dbReference type="HOGENOM" id="CLU_106619_2_1_4"/>
<dbReference type="OrthoDB" id="9798918at2"/>
<dbReference type="Proteomes" id="UP000006697">
    <property type="component" value="Chromosome"/>
</dbReference>
<dbReference type="CDD" id="cd18720">
    <property type="entry name" value="PIN_YqxD-like"/>
    <property type="match status" value="1"/>
</dbReference>
<dbReference type="HAMAP" id="MF_00489">
    <property type="entry name" value="UPF0178"/>
    <property type="match status" value="1"/>
</dbReference>
<dbReference type="InterPro" id="IPR003791">
    <property type="entry name" value="UPF0178"/>
</dbReference>
<dbReference type="NCBIfam" id="NF001095">
    <property type="entry name" value="PRK00124.1"/>
    <property type="match status" value="1"/>
</dbReference>
<dbReference type="PANTHER" id="PTHR35146">
    <property type="entry name" value="UPF0178 PROTEIN YAII"/>
    <property type="match status" value="1"/>
</dbReference>
<dbReference type="PANTHER" id="PTHR35146:SF1">
    <property type="entry name" value="UPF0178 PROTEIN YAII"/>
    <property type="match status" value="1"/>
</dbReference>
<dbReference type="Pfam" id="PF02639">
    <property type="entry name" value="DUF188"/>
    <property type="match status" value="1"/>
</dbReference>
<evidence type="ECO:0000255" key="1">
    <source>
        <dbReference type="HAMAP-Rule" id="MF_00489"/>
    </source>
</evidence>